<accession>B1PM81</accession>
<name>SGF11_MUSDO</name>
<reference key="1">
    <citation type="journal article" date="2009" name="Arch. Insect Biochem. Physiol.">
        <title>Identification of a novel bursicon-regulated transcriptional regulator, md13379, in the house fly Musca domestica.</title>
        <authorList>
            <person name="An S."/>
            <person name="Wang S."/>
            <person name="Stanley D."/>
            <person name="Song Q."/>
        </authorList>
    </citation>
    <scope>NUCLEOTIDE SEQUENCE [MRNA]</scope>
    <scope>INDUCTION</scope>
</reference>
<organism>
    <name type="scientific">Musca domestica</name>
    <name type="common">House fly</name>
    <dbReference type="NCBI Taxonomy" id="7370"/>
    <lineage>
        <taxon>Eukaryota</taxon>
        <taxon>Metazoa</taxon>
        <taxon>Ecdysozoa</taxon>
        <taxon>Arthropoda</taxon>
        <taxon>Hexapoda</taxon>
        <taxon>Insecta</taxon>
        <taxon>Pterygota</taxon>
        <taxon>Neoptera</taxon>
        <taxon>Endopterygota</taxon>
        <taxon>Diptera</taxon>
        <taxon>Brachycera</taxon>
        <taxon>Muscomorpha</taxon>
        <taxon>Muscoidea</taxon>
        <taxon>Muscidae</taxon>
        <taxon>Musca</taxon>
    </lineage>
</organism>
<protein>
    <recommendedName>
        <fullName evidence="2">SAGA-associated factor 11 homolog</fullName>
    </recommendedName>
</protein>
<feature type="chain" id="PRO_0000367535" description="SAGA-associated factor 11 homolog">
    <location>
        <begin position="1"/>
        <end position="220"/>
    </location>
</feature>
<feature type="zinc finger region" description="SGF11-type" evidence="2">
    <location>
        <begin position="126"/>
        <end position="147"/>
    </location>
</feature>
<feature type="region of interest" description="Disordered" evidence="3">
    <location>
        <begin position="1"/>
        <end position="38"/>
    </location>
</feature>
<feature type="region of interest" description="Disordered" evidence="3">
    <location>
        <begin position="160"/>
        <end position="220"/>
    </location>
</feature>
<feature type="compositionally biased region" description="Low complexity" evidence="3">
    <location>
        <begin position="160"/>
        <end position="177"/>
    </location>
</feature>
<feature type="compositionally biased region" description="Low complexity" evidence="3">
    <location>
        <begin position="204"/>
        <end position="220"/>
    </location>
</feature>
<dbReference type="EMBL" id="EU477240">
    <property type="protein sequence ID" value="ACA48515.1"/>
    <property type="molecule type" value="mRNA"/>
</dbReference>
<dbReference type="RefSeq" id="NP_001273803.1">
    <property type="nucleotide sequence ID" value="NM_001286874.1"/>
</dbReference>
<dbReference type="STRING" id="7370.B1PM81"/>
<dbReference type="EnsemblMetazoa" id="MDOA001579-RB">
    <property type="protein sequence ID" value="MDOA001579-PB"/>
    <property type="gene ID" value="MDOA001579"/>
</dbReference>
<dbReference type="GeneID" id="101888544"/>
<dbReference type="KEGG" id="mde:101888544"/>
<dbReference type="CTD" id="40035"/>
<dbReference type="VEuPathDB" id="VectorBase:MDOA001579"/>
<dbReference type="VEuPathDB" id="VectorBase:MDOMA2_000547"/>
<dbReference type="eggNOG" id="KOG2612">
    <property type="taxonomic scope" value="Eukaryota"/>
</dbReference>
<dbReference type="OrthoDB" id="21557at2759"/>
<dbReference type="Proteomes" id="UP000694905">
    <property type="component" value="Unplaced"/>
</dbReference>
<dbReference type="GO" id="GO:0071819">
    <property type="term" value="C:DUBm complex"/>
    <property type="evidence" value="ECO:0007669"/>
    <property type="project" value="UniProtKB-UniRule"/>
</dbReference>
<dbReference type="GO" id="GO:0000124">
    <property type="term" value="C:SAGA complex"/>
    <property type="evidence" value="ECO:0007669"/>
    <property type="project" value="UniProtKB-UniRule"/>
</dbReference>
<dbReference type="GO" id="GO:0003713">
    <property type="term" value="F:transcription coactivator activity"/>
    <property type="evidence" value="ECO:0007669"/>
    <property type="project" value="UniProtKB-UniRule"/>
</dbReference>
<dbReference type="GO" id="GO:0008270">
    <property type="term" value="F:zinc ion binding"/>
    <property type="evidence" value="ECO:0007669"/>
    <property type="project" value="UniProtKB-UniRule"/>
</dbReference>
<dbReference type="GO" id="GO:0006325">
    <property type="term" value="P:chromatin organization"/>
    <property type="evidence" value="ECO:0007669"/>
    <property type="project" value="UniProtKB-KW"/>
</dbReference>
<dbReference type="GO" id="GO:0006357">
    <property type="term" value="P:regulation of transcription by RNA polymerase II"/>
    <property type="evidence" value="ECO:0007669"/>
    <property type="project" value="TreeGrafter"/>
</dbReference>
<dbReference type="FunFam" id="3.30.160.60:FF:000118">
    <property type="entry name" value="Ataxin-7-like protein 3"/>
    <property type="match status" value="1"/>
</dbReference>
<dbReference type="Gene3D" id="3.30.160.60">
    <property type="entry name" value="Classic Zinc Finger"/>
    <property type="match status" value="1"/>
</dbReference>
<dbReference type="HAMAP" id="MF_03047">
    <property type="entry name" value="Sgf11"/>
    <property type="match status" value="1"/>
</dbReference>
<dbReference type="InterPro" id="IPR013246">
    <property type="entry name" value="SAGA_su_Sgf11"/>
</dbReference>
<dbReference type="InterPro" id="IPR051078">
    <property type="entry name" value="SGF11"/>
</dbReference>
<dbReference type="PANTHER" id="PTHR46367">
    <property type="entry name" value="ATAXIN-7-LIKE PROTEIN 3"/>
    <property type="match status" value="1"/>
</dbReference>
<dbReference type="PANTHER" id="PTHR46367:SF1">
    <property type="entry name" value="ATAXIN-7-LIKE PROTEIN 3"/>
    <property type="match status" value="1"/>
</dbReference>
<dbReference type="Pfam" id="PF08209">
    <property type="entry name" value="Sgf11"/>
    <property type="match status" value="1"/>
</dbReference>
<evidence type="ECO:0000250" key="1"/>
<evidence type="ECO:0000255" key="2">
    <source>
        <dbReference type="HAMAP-Rule" id="MF_03047"/>
    </source>
</evidence>
<evidence type="ECO:0000256" key="3">
    <source>
        <dbReference type="SAM" id="MobiDB-lite"/>
    </source>
</evidence>
<evidence type="ECO:0000269" key="4">
    <source>
    </source>
</evidence>
<sequence length="220" mass="23900">MSTGTANSAVSSKSTNSTTSTSKVPVNEKSNNSQNANTSTASIIKSYREIVNDPKNLDEAANYLYQSLLDDAVVGVFLEIHHLRKTGNLTAMDGVNEDESETSFRIVDMPNFDIFGISTAKKPMDCTCPNCDRPVSAARFAPHLEKCMGMGRISSRIASRRLATKESNSASSSSSSSYLQTTNAGSDDEDDVDWSSEKRRKKSSQNSRNNGSKKNNGKTF</sequence>
<keyword id="KW-0010">Activator</keyword>
<keyword id="KW-0156">Chromatin regulator</keyword>
<keyword id="KW-0479">Metal-binding</keyword>
<keyword id="KW-0539">Nucleus</keyword>
<keyword id="KW-1185">Reference proteome</keyword>
<keyword id="KW-0804">Transcription</keyword>
<keyword id="KW-0805">Transcription regulation</keyword>
<keyword id="KW-0862">Zinc</keyword>
<keyword id="KW-0863">Zinc-finger</keyword>
<proteinExistence type="evidence at transcript level"/>
<comment type="function">
    <text evidence="2">Component of the transcription regulatory histone acetylation (HAT) complex SAGA, a multiprotein complex that activates transcription by remodeling chromatin and mediating histone acetylation and deubiquitination. Within the SAGA complex, participates in a subcomplex that specifically deubiquitinates histone H2B. The SAGA complex is recruited to specific gene promoters by activators, where it is required for transcription.</text>
</comment>
<comment type="subunit">
    <text evidence="1">Component of some SAGA transcription coactivator-HAT complexes. Within the SAGA complex, participates in a subcomplex of SAGA called the DUB module (deubiquitination module) (By similarity).</text>
</comment>
<comment type="subcellular location">
    <subcellularLocation>
        <location evidence="2">Nucleus</location>
    </subcellularLocation>
</comment>
<comment type="induction">
    <text evidence="4">By bursicon.</text>
</comment>
<comment type="domain">
    <text evidence="2">The long N-terminal helix forms part of the 'assembly lobe' of the SAGA deubiquitination module.</text>
</comment>
<comment type="domain">
    <text evidence="2">The C-terminal SGF11-type zinc-finger domain forms part of the 'catalytic lobe' of the SAGA deubiquitination module.</text>
</comment>
<comment type="similarity">
    <text evidence="2">Belongs to the SGF11 family.</text>
</comment>
<gene>
    <name evidence="2" type="primary">Sgf11</name>
</gene>